<protein>
    <recommendedName>
        <fullName>Ornithine carbamoyltransferase</fullName>
        <shortName>OTCase</shortName>
        <ecNumber>2.1.3.3</ecNumber>
    </recommendedName>
</protein>
<accession>O86408</accession>
<name>OTC_NEIPH</name>
<gene>
    <name type="primary">argF</name>
</gene>
<reference key="1">
    <citation type="journal article" date="1999" name="Mol. Biol. Evol.">
        <title>Networks and groups within the genus Neisseria: analysis of argF, recA, rho, and 16S rRNA sequences from human Neisseria species.</title>
        <authorList>
            <person name="Smith N.H."/>
            <person name="Holmes E.C."/>
            <person name="Donovan G.M."/>
            <person name="Carpenter G.A."/>
            <person name="Spratt B.G."/>
        </authorList>
    </citation>
    <scope>NUCLEOTIDE SEQUENCE [GENOMIC DNA]</scope>
    <source>
        <strain>NCTC 4590 / Flava</strain>
    </source>
</reference>
<organism>
    <name type="scientific">Neisseria pharyngis</name>
    <dbReference type="NCBI Taxonomy" id="29434"/>
    <lineage>
        <taxon>Bacteria</taxon>
        <taxon>Pseudomonadati</taxon>
        <taxon>Pseudomonadota</taxon>
        <taxon>Betaproteobacteria</taxon>
        <taxon>Neisseriales</taxon>
        <taxon>Neisseriaceae</taxon>
        <taxon>Neisseria</taxon>
    </lineage>
</organism>
<sequence>DQGAGVTYLEPSASQIGHKESIKDTARVLGRMYDGIEYRGFGQDVVEELAKYAGVPVFNGLTNEFHPTQMLADALTMREHSGKPLSQTAFAYVGDARYNMANSLLVLGAKLGMDVRIGAPKTLWPSEHIVARARAVAKETGGRILLTENAEEAVKGVDFIHTDVWVSMGEPKEAWQERIDLLKDYRVTPELMAASGNPQVKFMHCLPAFHNRETKVGEWIYETFGLNGVEVT</sequence>
<comment type="function">
    <text evidence="1">Reversibly catalyzes the transfer of the carbamoyl group from carbamoyl phosphate (CP) to the N(epsilon) atom of ornithine (ORN) to produce L-citrulline.</text>
</comment>
<comment type="catalytic activity">
    <reaction>
        <text>carbamoyl phosphate + L-ornithine = L-citrulline + phosphate + H(+)</text>
        <dbReference type="Rhea" id="RHEA:19513"/>
        <dbReference type="ChEBI" id="CHEBI:15378"/>
        <dbReference type="ChEBI" id="CHEBI:43474"/>
        <dbReference type="ChEBI" id="CHEBI:46911"/>
        <dbReference type="ChEBI" id="CHEBI:57743"/>
        <dbReference type="ChEBI" id="CHEBI:58228"/>
        <dbReference type="EC" id="2.1.3.3"/>
    </reaction>
</comment>
<comment type="pathway">
    <text>Amino-acid biosynthesis; L-arginine biosynthesis; L-arginine from L-ornithine and carbamoyl phosphate: step 1/3.</text>
</comment>
<comment type="subcellular location">
    <subcellularLocation>
        <location evidence="1">Cytoplasm</location>
    </subcellularLocation>
</comment>
<comment type="similarity">
    <text evidence="2">Belongs to the aspartate/ornithine carbamoyltransferase superfamily. OTCase family.</text>
</comment>
<proteinExistence type="inferred from homology"/>
<feature type="chain" id="PRO_0000112969" description="Ornithine carbamoyltransferase">
    <location>
        <begin position="1" status="less than"/>
        <end position="232" status="greater than"/>
    </location>
</feature>
<feature type="binding site" evidence="1">
    <location>
        <position position="15"/>
    </location>
    <ligand>
        <name>carbamoyl phosphate</name>
        <dbReference type="ChEBI" id="CHEBI:58228"/>
    </ligand>
</feature>
<feature type="binding site" evidence="1">
    <location>
        <position position="39"/>
    </location>
    <ligand>
        <name>carbamoyl phosphate</name>
        <dbReference type="ChEBI" id="CHEBI:58228"/>
    </ligand>
</feature>
<feature type="binding site" evidence="1">
    <location>
        <begin position="66"/>
        <end position="69"/>
    </location>
    <ligand>
        <name>carbamoyl phosphate</name>
        <dbReference type="ChEBI" id="CHEBI:58228"/>
    </ligand>
</feature>
<feature type="binding site" evidence="1">
    <location>
        <position position="99"/>
    </location>
    <ligand>
        <name>L-ornithine</name>
        <dbReference type="ChEBI" id="CHEBI:46911"/>
    </ligand>
</feature>
<feature type="binding site" evidence="1">
    <location>
        <position position="163"/>
    </location>
    <ligand>
        <name>L-ornithine</name>
        <dbReference type="ChEBI" id="CHEBI:46911"/>
    </ligand>
</feature>
<feature type="binding site" evidence="1">
    <location>
        <begin position="167"/>
        <end position="168"/>
    </location>
    <ligand>
        <name>L-ornithine</name>
        <dbReference type="ChEBI" id="CHEBI:46911"/>
    </ligand>
</feature>
<feature type="binding site" evidence="1">
    <location>
        <begin position="204"/>
        <end position="207"/>
    </location>
    <ligand>
        <name>carbamoyl phosphate</name>
        <dbReference type="ChEBI" id="CHEBI:58228"/>
    </ligand>
</feature>
<feature type="binding site" evidence="1">
    <location>
        <position position="232"/>
    </location>
    <ligand>
        <name>carbamoyl phosphate</name>
        <dbReference type="ChEBI" id="CHEBI:58228"/>
    </ligand>
</feature>
<feature type="site" description="Important for structural integrity" evidence="1">
    <location>
        <position position="79"/>
    </location>
</feature>
<feature type="non-terminal residue">
    <location>
        <position position="1"/>
    </location>
</feature>
<feature type="non-terminal residue">
    <location>
        <position position="232"/>
    </location>
</feature>
<keyword id="KW-0028">Amino-acid biosynthesis</keyword>
<keyword id="KW-0055">Arginine biosynthesis</keyword>
<keyword id="KW-0963">Cytoplasm</keyword>
<keyword id="KW-0808">Transferase</keyword>
<evidence type="ECO:0000250" key="1"/>
<evidence type="ECO:0000305" key="2"/>
<dbReference type="EC" id="2.1.3.3"/>
<dbReference type="EMBL" id="AJ223905">
    <property type="protein sequence ID" value="CAA11636.1"/>
    <property type="molecule type" value="Genomic_DNA"/>
</dbReference>
<dbReference type="SMR" id="O86408"/>
<dbReference type="UniPathway" id="UPA00068">
    <property type="reaction ID" value="UER00112"/>
</dbReference>
<dbReference type="GO" id="GO:0005737">
    <property type="term" value="C:cytoplasm"/>
    <property type="evidence" value="ECO:0007669"/>
    <property type="project" value="UniProtKB-SubCell"/>
</dbReference>
<dbReference type="GO" id="GO:0016597">
    <property type="term" value="F:amino acid binding"/>
    <property type="evidence" value="ECO:0007669"/>
    <property type="project" value="InterPro"/>
</dbReference>
<dbReference type="GO" id="GO:0004585">
    <property type="term" value="F:ornithine carbamoyltransferase activity"/>
    <property type="evidence" value="ECO:0007669"/>
    <property type="project" value="UniProtKB-EC"/>
</dbReference>
<dbReference type="GO" id="GO:0042450">
    <property type="term" value="P:arginine biosynthetic process via ornithine"/>
    <property type="evidence" value="ECO:0007669"/>
    <property type="project" value="TreeGrafter"/>
</dbReference>
<dbReference type="GO" id="GO:0019240">
    <property type="term" value="P:citrulline biosynthetic process"/>
    <property type="evidence" value="ECO:0007669"/>
    <property type="project" value="TreeGrafter"/>
</dbReference>
<dbReference type="GO" id="GO:0006526">
    <property type="term" value="P:L-arginine biosynthetic process"/>
    <property type="evidence" value="ECO:0007669"/>
    <property type="project" value="UniProtKB-UniPathway"/>
</dbReference>
<dbReference type="FunFam" id="3.40.50.1370:FF:000008">
    <property type="entry name" value="Ornithine carbamoyltransferase"/>
    <property type="match status" value="1"/>
</dbReference>
<dbReference type="Gene3D" id="3.40.50.1370">
    <property type="entry name" value="Aspartate/ornithine carbamoyltransferase"/>
    <property type="match status" value="2"/>
</dbReference>
<dbReference type="InterPro" id="IPR006132">
    <property type="entry name" value="Asp/Orn_carbamoyltranf_P-bd"/>
</dbReference>
<dbReference type="InterPro" id="IPR006130">
    <property type="entry name" value="Asp/Orn_carbamoylTrfase"/>
</dbReference>
<dbReference type="InterPro" id="IPR036901">
    <property type="entry name" value="Asp/Orn_carbamoylTrfase_sf"/>
</dbReference>
<dbReference type="InterPro" id="IPR006131">
    <property type="entry name" value="Asp_carbamoyltransf_Asp/Orn-bd"/>
</dbReference>
<dbReference type="InterPro" id="IPR002292">
    <property type="entry name" value="Orn/put_carbamltrans"/>
</dbReference>
<dbReference type="NCBIfam" id="TIGR00658">
    <property type="entry name" value="orni_carb_tr"/>
    <property type="match status" value="1"/>
</dbReference>
<dbReference type="PANTHER" id="PTHR45753:SF2">
    <property type="entry name" value="ORNITHINE CARBAMOYLTRANSFERASE"/>
    <property type="match status" value="1"/>
</dbReference>
<dbReference type="PANTHER" id="PTHR45753">
    <property type="entry name" value="ORNITHINE CARBAMOYLTRANSFERASE, MITOCHONDRIAL"/>
    <property type="match status" value="1"/>
</dbReference>
<dbReference type="Pfam" id="PF00185">
    <property type="entry name" value="OTCace"/>
    <property type="match status" value="1"/>
</dbReference>
<dbReference type="Pfam" id="PF02729">
    <property type="entry name" value="OTCace_N"/>
    <property type="match status" value="1"/>
</dbReference>
<dbReference type="PRINTS" id="PR00100">
    <property type="entry name" value="AOTCASE"/>
</dbReference>
<dbReference type="PRINTS" id="PR00102">
    <property type="entry name" value="OTCASE"/>
</dbReference>
<dbReference type="SUPFAM" id="SSF53671">
    <property type="entry name" value="Aspartate/ornithine carbamoyltransferase"/>
    <property type="match status" value="1"/>
</dbReference>